<gene>
    <name type="primary">wtpB</name>
    <name type="ordered locus">TK0018</name>
</gene>
<name>WTPB_THEKO</name>
<accession>Q5JEB3</accession>
<keyword id="KW-1003">Cell membrane</keyword>
<keyword id="KW-0472">Membrane</keyword>
<keyword id="KW-0500">Molybdenum</keyword>
<keyword id="KW-1185">Reference proteome</keyword>
<keyword id="KW-0812">Transmembrane</keyword>
<keyword id="KW-1133">Transmembrane helix</keyword>
<keyword id="KW-0813">Transport</keyword>
<dbReference type="EMBL" id="AP006878">
    <property type="protein sequence ID" value="BAD84207.1"/>
    <property type="molecule type" value="Genomic_DNA"/>
</dbReference>
<dbReference type="RefSeq" id="WP_011248973.1">
    <property type="nucleotide sequence ID" value="NC_006624.1"/>
</dbReference>
<dbReference type="SMR" id="Q5JEB3"/>
<dbReference type="FunCoup" id="Q5JEB3">
    <property type="interactions" value="8"/>
</dbReference>
<dbReference type="STRING" id="69014.TK0018"/>
<dbReference type="EnsemblBacteria" id="BAD84207">
    <property type="protein sequence ID" value="BAD84207"/>
    <property type="gene ID" value="TK0018"/>
</dbReference>
<dbReference type="GeneID" id="78446518"/>
<dbReference type="KEGG" id="tko:TK0018"/>
<dbReference type="PATRIC" id="fig|69014.16.peg.18"/>
<dbReference type="eggNOG" id="arCOG00164">
    <property type="taxonomic scope" value="Archaea"/>
</dbReference>
<dbReference type="HOGENOM" id="CLU_016047_14_1_2"/>
<dbReference type="InParanoid" id="Q5JEB3"/>
<dbReference type="OrthoDB" id="11163at2157"/>
<dbReference type="PhylomeDB" id="Q5JEB3"/>
<dbReference type="Proteomes" id="UP000000536">
    <property type="component" value="Chromosome"/>
</dbReference>
<dbReference type="GO" id="GO:0005886">
    <property type="term" value="C:plasma membrane"/>
    <property type="evidence" value="ECO:0007669"/>
    <property type="project" value="UniProtKB-SubCell"/>
</dbReference>
<dbReference type="GO" id="GO:0055085">
    <property type="term" value="P:transmembrane transport"/>
    <property type="evidence" value="ECO:0007669"/>
    <property type="project" value="InterPro"/>
</dbReference>
<dbReference type="CDD" id="cd06261">
    <property type="entry name" value="TM_PBP2"/>
    <property type="match status" value="1"/>
</dbReference>
<dbReference type="Gene3D" id="1.10.3720.10">
    <property type="entry name" value="MetI-like"/>
    <property type="match status" value="1"/>
</dbReference>
<dbReference type="InterPro" id="IPR000515">
    <property type="entry name" value="MetI-like"/>
</dbReference>
<dbReference type="InterPro" id="IPR035906">
    <property type="entry name" value="MetI-like_sf"/>
</dbReference>
<dbReference type="InterPro" id="IPR053405">
    <property type="entry name" value="Mo/W_ABC_Transporter_Permease"/>
</dbReference>
<dbReference type="NCBIfam" id="NF040839">
    <property type="entry name" value="tungstate_WtpB"/>
    <property type="match status" value="1"/>
</dbReference>
<dbReference type="PANTHER" id="PTHR30183">
    <property type="entry name" value="MOLYBDENUM TRANSPORT SYSTEM PERMEASE PROTEIN MODB"/>
    <property type="match status" value="1"/>
</dbReference>
<dbReference type="PANTHER" id="PTHR30183:SF3">
    <property type="entry name" value="MOLYBDENUM TRANSPORT SYSTEM PERMEASE PROTEIN MODB"/>
    <property type="match status" value="1"/>
</dbReference>
<dbReference type="Pfam" id="PF00528">
    <property type="entry name" value="BPD_transp_1"/>
    <property type="match status" value="1"/>
</dbReference>
<dbReference type="SUPFAM" id="SSF161098">
    <property type="entry name" value="MetI-like"/>
    <property type="match status" value="1"/>
</dbReference>
<dbReference type="PROSITE" id="PS50928">
    <property type="entry name" value="ABC_TM1"/>
    <property type="match status" value="1"/>
</dbReference>
<sequence>MRRDYTLYLFAALGTFLIAYIAVPIAVIFLKQASDVEMLVKTLHDPYVIEAIRNSLLTATATALIALLFGVPLGYVLARKDFPGKSAVQALVDVPIVIPHSVVGIMLLVTFSNSILDSYKGIVAAMLFVSAPFTINAARDGFLAVDEKLEAVARTLGASRWRAFLSISLPMAFPSIASGAIMTWARAISEVGAILIVAYYPKTAQVLILEYFNNYGLRASRPIAVIMVSLSLGIFVILRWLVGRKNA</sequence>
<organism>
    <name type="scientific">Thermococcus kodakarensis (strain ATCC BAA-918 / JCM 12380 / KOD1)</name>
    <name type="common">Pyrococcus kodakaraensis (strain KOD1)</name>
    <dbReference type="NCBI Taxonomy" id="69014"/>
    <lineage>
        <taxon>Archaea</taxon>
        <taxon>Methanobacteriati</taxon>
        <taxon>Methanobacteriota</taxon>
        <taxon>Thermococci</taxon>
        <taxon>Thermococcales</taxon>
        <taxon>Thermococcaceae</taxon>
        <taxon>Thermococcus</taxon>
    </lineage>
</organism>
<feature type="chain" id="PRO_0000338500" description="Molybdate/tungstate transport system permease protein WtpB">
    <location>
        <begin position="1"/>
        <end position="247"/>
    </location>
</feature>
<feature type="topological domain" description="Cytoplasmic" evidence="2">
    <location>
        <begin position="1"/>
        <end position="8"/>
    </location>
</feature>
<feature type="transmembrane region" description="Helical" evidence="3">
    <location>
        <begin position="9"/>
        <end position="29"/>
    </location>
</feature>
<feature type="topological domain" description="Extracellular" evidence="2">
    <location>
        <begin position="30"/>
        <end position="55"/>
    </location>
</feature>
<feature type="transmembrane region" description="Helical" evidence="3">
    <location>
        <begin position="56"/>
        <end position="76"/>
    </location>
</feature>
<feature type="topological domain" description="Cytoplasmic" evidence="2">
    <location>
        <begin position="77"/>
        <end position="90"/>
    </location>
</feature>
<feature type="transmembrane region" description="Helical" evidence="3">
    <location>
        <begin position="91"/>
        <end position="111"/>
    </location>
</feature>
<feature type="topological domain" description="Extracellular" evidence="2">
    <location>
        <begin position="112"/>
        <end position="114"/>
    </location>
</feature>
<feature type="transmembrane region" description="Helical" evidence="3">
    <location>
        <begin position="115"/>
        <end position="135"/>
    </location>
</feature>
<feature type="topological domain" description="Cytoplasmic" evidence="2">
    <location>
        <begin position="136"/>
        <end position="163"/>
    </location>
</feature>
<feature type="transmembrane region" description="Helical" evidence="3">
    <location>
        <begin position="164"/>
        <end position="184"/>
    </location>
</feature>
<feature type="topological domain" description="Extracellular" evidence="2">
    <location>
        <begin position="185"/>
        <end position="222"/>
    </location>
</feature>
<feature type="transmembrane region" description="Helical" evidence="3">
    <location>
        <begin position="223"/>
        <end position="243"/>
    </location>
</feature>
<feature type="topological domain" description="Cytoplasmic" evidence="2">
    <location>
        <begin position="244"/>
        <end position="247"/>
    </location>
</feature>
<feature type="domain" description="ABC transmembrane type-1" evidence="3">
    <location>
        <begin position="52"/>
        <end position="238"/>
    </location>
</feature>
<comment type="function">
    <text evidence="1">Part of the ABC transporter complex WtpABC involved in molybdate/tungstate import. Probably responsible for the translocation of the substrate across the membrane (By similarity).</text>
</comment>
<comment type="subunit">
    <text evidence="1">The complex is composed of two ATP-binding proteins (WtpC), two transmembrane proteins (WtpB) and a solute-binding protein (WtpA).</text>
</comment>
<comment type="subcellular location">
    <subcellularLocation>
        <location evidence="1">Cell membrane</location>
        <topology evidence="3">Multi-pass membrane protein</topology>
    </subcellularLocation>
</comment>
<comment type="similarity">
    <text evidence="4">Belongs to the binding-protein-dependent transport system permease family.</text>
</comment>
<proteinExistence type="inferred from homology"/>
<reference key="1">
    <citation type="journal article" date="2005" name="Genome Res.">
        <title>Complete genome sequence of the hyperthermophilic archaeon Thermococcus kodakaraensis KOD1 and comparison with Pyrococcus genomes.</title>
        <authorList>
            <person name="Fukui T."/>
            <person name="Atomi H."/>
            <person name="Kanai T."/>
            <person name="Matsumi R."/>
            <person name="Fujiwara S."/>
            <person name="Imanaka T."/>
        </authorList>
    </citation>
    <scope>NUCLEOTIDE SEQUENCE [LARGE SCALE GENOMIC DNA]</scope>
    <source>
        <strain>ATCC BAA-918 / JCM 12380 / KOD1</strain>
    </source>
</reference>
<evidence type="ECO:0000250" key="1"/>
<evidence type="ECO:0000255" key="2"/>
<evidence type="ECO:0000255" key="3">
    <source>
        <dbReference type="PROSITE-ProRule" id="PRU00441"/>
    </source>
</evidence>
<evidence type="ECO:0000305" key="4"/>
<protein>
    <recommendedName>
        <fullName>Molybdate/tungstate transport system permease protein WtpB</fullName>
    </recommendedName>
</protein>